<sequence>MENEPDTICILVDADACPVKAEIYRVAERHNLPVVIVANSFIAIPREAQRVERVVVSGNLDAADDWIAEHSRPGAVVVTADIPLASHALEKGASVIAPNGRIHTQSTIGNTLATRNLMDSLRSAGEVTGGPAPFAPKDRSAFLSALDLAIVRLKRAGFHAS</sequence>
<evidence type="ECO:0000255" key="1">
    <source>
        <dbReference type="HAMAP-Rule" id="MF_00489"/>
    </source>
</evidence>
<feature type="chain" id="PRO_0000175968" description="UPF0178 protein BruAb1_1955">
    <location>
        <begin position="1"/>
        <end position="161"/>
    </location>
</feature>
<name>Y1955_BRUAB</name>
<proteinExistence type="inferred from homology"/>
<protein>
    <recommendedName>
        <fullName evidence="1">UPF0178 protein BruAb1_1955</fullName>
    </recommendedName>
</protein>
<gene>
    <name type="ordered locus">BruAb1_1955</name>
</gene>
<reference key="1">
    <citation type="journal article" date="2005" name="J. Bacteriol.">
        <title>Completion of the genome sequence of Brucella abortus and comparison to the highly similar genomes of Brucella melitensis and Brucella suis.</title>
        <authorList>
            <person name="Halling S.M."/>
            <person name="Peterson-Burch B.D."/>
            <person name="Bricker B.J."/>
            <person name="Zuerner R.L."/>
            <person name="Qing Z."/>
            <person name="Li L.-L."/>
            <person name="Kapur V."/>
            <person name="Alt D.P."/>
            <person name="Olsen S.C."/>
        </authorList>
    </citation>
    <scope>NUCLEOTIDE SEQUENCE [LARGE SCALE GENOMIC DNA]</scope>
    <source>
        <strain>9-941</strain>
    </source>
</reference>
<accession>Q57AS5</accession>
<comment type="similarity">
    <text evidence="1">Belongs to the UPF0178 family.</text>
</comment>
<dbReference type="EMBL" id="AE017223">
    <property type="protein sequence ID" value="AAX75259.1"/>
    <property type="molecule type" value="Genomic_DNA"/>
</dbReference>
<dbReference type="RefSeq" id="WP_002965045.1">
    <property type="nucleotide sequence ID" value="NC_006932.1"/>
</dbReference>
<dbReference type="EnsemblBacteria" id="AAX75259">
    <property type="protein sequence ID" value="AAX75259"/>
    <property type="gene ID" value="BruAb1_1955"/>
</dbReference>
<dbReference type="KEGG" id="bmb:BruAb1_1955"/>
<dbReference type="HOGENOM" id="CLU_106619_2_1_5"/>
<dbReference type="Proteomes" id="UP000000540">
    <property type="component" value="Chromosome I"/>
</dbReference>
<dbReference type="HAMAP" id="MF_00489">
    <property type="entry name" value="UPF0178"/>
    <property type="match status" value="1"/>
</dbReference>
<dbReference type="InterPro" id="IPR003791">
    <property type="entry name" value="UPF0178"/>
</dbReference>
<dbReference type="NCBIfam" id="NF001095">
    <property type="entry name" value="PRK00124.1"/>
    <property type="match status" value="1"/>
</dbReference>
<dbReference type="PANTHER" id="PTHR35146">
    <property type="entry name" value="UPF0178 PROTEIN YAII"/>
    <property type="match status" value="1"/>
</dbReference>
<dbReference type="PANTHER" id="PTHR35146:SF1">
    <property type="entry name" value="UPF0178 PROTEIN YAII"/>
    <property type="match status" value="1"/>
</dbReference>
<dbReference type="Pfam" id="PF02639">
    <property type="entry name" value="DUF188"/>
    <property type="match status" value="1"/>
</dbReference>
<organism>
    <name type="scientific">Brucella abortus biovar 1 (strain 9-941)</name>
    <dbReference type="NCBI Taxonomy" id="262698"/>
    <lineage>
        <taxon>Bacteria</taxon>
        <taxon>Pseudomonadati</taxon>
        <taxon>Pseudomonadota</taxon>
        <taxon>Alphaproteobacteria</taxon>
        <taxon>Hyphomicrobiales</taxon>
        <taxon>Brucellaceae</taxon>
        <taxon>Brucella/Ochrobactrum group</taxon>
        <taxon>Brucella</taxon>
    </lineage>
</organism>